<comment type="function">
    <text evidence="1">Endoribonuclease that initiates mRNA decay.</text>
</comment>
<comment type="similarity">
    <text evidence="1">Belongs to the RNase Y family.</text>
</comment>
<keyword id="KW-0255">Endonuclease</keyword>
<keyword id="KW-0378">Hydrolase</keyword>
<keyword id="KW-0540">Nuclease</keyword>
<keyword id="KW-1185">Reference proteome</keyword>
<keyword id="KW-0694">RNA-binding</keyword>
<reference key="1">
    <citation type="submission" date="2008-04" db="EMBL/GenBank/DDBJ databases">
        <title>Complete sequence of chromosome of Natranaerobius thermophilus JW/NM-WN-LF.</title>
        <authorList>
            <consortium name="US DOE Joint Genome Institute"/>
            <person name="Copeland A."/>
            <person name="Lucas S."/>
            <person name="Lapidus A."/>
            <person name="Glavina del Rio T."/>
            <person name="Dalin E."/>
            <person name="Tice H."/>
            <person name="Bruce D."/>
            <person name="Goodwin L."/>
            <person name="Pitluck S."/>
            <person name="Chertkov O."/>
            <person name="Brettin T."/>
            <person name="Detter J.C."/>
            <person name="Han C."/>
            <person name="Kuske C.R."/>
            <person name="Schmutz J."/>
            <person name="Larimer F."/>
            <person name="Land M."/>
            <person name="Hauser L."/>
            <person name="Kyrpides N."/>
            <person name="Lykidis A."/>
            <person name="Mesbah N.M."/>
            <person name="Wiegel J."/>
        </authorList>
    </citation>
    <scope>NUCLEOTIDE SEQUENCE [LARGE SCALE GENOMIC DNA]</scope>
    <source>
        <strain>ATCC BAA-1301 / DSM 18059 / JW/NM-WN-LF</strain>
    </source>
</reference>
<proteinExistence type="inferred from homology"/>
<feature type="chain" id="PRO_0000344911" description="Ribonuclease Y">
    <location>
        <begin position="1"/>
        <end position="487"/>
    </location>
</feature>
<feature type="domain" description="KH" evidence="1">
    <location>
        <begin position="177"/>
        <end position="240"/>
    </location>
</feature>
<feature type="domain" description="HD" evidence="2">
    <location>
        <begin position="303"/>
        <end position="396"/>
    </location>
</feature>
<feature type="region of interest" description="Disordered" evidence="3">
    <location>
        <begin position="36"/>
        <end position="55"/>
    </location>
</feature>
<feature type="region of interest" description="Disordered" evidence="3">
    <location>
        <begin position="63"/>
        <end position="83"/>
    </location>
</feature>
<evidence type="ECO:0000255" key="1">
    <source>
        <dbReference type="HAMAP-Rule" id="MF_00335"/>
    </source>
</evidence>
<evidence type="ECO:0000255" key="2">
    <source>
        <dbReference type="PROSITE-ProRule" id="PRU01175"/>
    </source>
</evidence>
<evidence type="ECO:0000256" key="3">
    <source>
        <dbReference type="SAM" id="MobiDB-lite"/>
    </source>
</evidence>
<accession>B2A3V6</accession>
<protein>
    <recommendedName>
        <fullName evidence="1">Ribonuclease Y</fullName>
        <shortName evidence="1">RNase Y</shortName>
        <ecNumber evidence="1">3.1.-.-</ecNumber>
    </recommendedName>
</protein>
<name>RNY_NATTJ</name>
<organism>
    <name type="scientific">Natranaerobius thermophilus (strain ATCC BAA-1301 / DSM 18059 / JW/NM-WN-LF)</name>
    <dbReference type="NCBI Taxonomy" id="457570"/>
    <lineage>
        <taxon>Bacteria</taxon>
        <taxon>Bacillati</taxon>
        <taxon>Bacillota</taxon>
        <taxon>Clostridia</taxon>
        <taxon>Natranaerobiales</taxon>
        <taxon>Natranaerobiaceae</taxon>
        <taxon>Natranaerobius</taxon>
    </lineage>
</organism>
<gene>
    <name evidence="1" type="primary">rny</name>
    <name type="ordered locus">Nther_1475</name>
</gene>
<dbReference type="EC" id="3.1.-.-" evidence="1"/>
<dbReference type="EMBL" id="CP001034">
    <property type="protein sequence ID" value="ACB85058.1"/>
    <property type="molecule type" value="Genomic_DNA"/>
</dbReference>
<dbReference type="RefSeq" id="WP_012447930.1">
    <property type="nucleotide sequence ID" value="NZ_CP144221.1"/>
</dbReference>
<dbReference type="SMR" id="B2A3V6"/>
<dbReference type="FunCoup" id="B2A3V6">
    <property type="interactions" value="111"/>
</dbReference>
<dbReference type="STRING" id="457570.Nther_1475"/>
<dbReference type="KEGG" id="nth:Nther_1475"/>
<dbReference type="eggNOG" id="COG1418">
    <property type="taxonomic scope" value="Bacteria"/>
</dbReference>
<dbReference type="HOGENOM" id="CLU_028328_0_0_9"/>
<dbReference type="InParanoid" id="B2A3V6"/>
<dbReference type="Proteomes" id="UP000001683">
    <property type="component" value="Chromosome"/>
</dbReference>
<dbReference type="GO" id="GO:0005886">
    <property type="term" value="C:plasma membrane"/>
    <property type="evidence" value="ECO:0007669"/>
    <property type="project" value="UniProtKB-UniRule"/>
</dbReference>
<dbReference type="GO" id="GO:0003723">
    <property type="term" value="F:RNA binding"/>
    <property type="evidence" value="ECO:0007669"/>
    <property type="project" value="UniProtKB-UniRule"/>
</dbReference>
<dbReference type="GO" id="GO:0004521">
    <property type="term" value="F:RNA endonuclease activity"/>
    <property type="evidence" value="ECO:0007669"/>
    <property type="project" value="UniProtKB-UniRule"/>
</dbReference>
<dbReference type="GO" id="GO:0006402">
    <property type="term" value="P:mRNA catabolic process"/>
    <property type="evidence" value="ECO:0007669"/>
    <property type="project" value="UniProtKB-UniRule"/>
</dbReference>
<dbReference type="CDD" id="cd00077">
    <property type="entry name" value="HDc"/>
    <property type="match status" value="1"/>
</dbReference>
<dbReference type="CDD" id="cd22431">
    <property type="entry name" value="KH-I_RNaseY"/>
    <property type="match status" value="1"/>
</dbReference>
<dbReference type="FunFam" id="1.10.3210.10:FF:000022">
    <property type="entry name" value="Ribonuclease Y"/>
    <property type="match status" value="1"/>
</dbReference>
<dbReference type="FunFam" id="3.30.1370.10:FF:000006">
    <property type="entry name" value="Ribonuclease Y"/>
    <property type="match status" value="1"/>
</dbReference>
<dbReference type="Gene3D" id="1.10.3210.10">
    <property type="entry name" value="Hypothetical protein af1432"/>
    <property type="match status" value="1"/>
</dbReference>
<dbReference type="Gene3D" id="3.30.1370.10">
    <property type="entry name" value="K Homology domain, type 1"/>
    <property type="match status" value="1"/>
</dbReference>
<dbReference type="HAMAP" id="MF_00335">
    <property type="entry name" value="RNase_Y"/>
    <property type="match status" value="1"/>
</dbReference>
<dbReference type="InterPro" id="IPR003607">
    <property type="entry name" value="HD/PDEase_dom"/>
</dbReference>
<dbReference type="InterPro" id="IPR006674">
    <property type="entry name" value="HD_domain"/>
</dbReference>
<dbReference type="InterPro" id="IPR006675">
    <property type="entry name" value="HDIG_dom"/>
</dbReference>
<dbReference type="InterPro" id="IPR004087">
    <property type="entry name" value="KH_dom"/>
</dbReference>
<dbReference type="InterPro" id="IPR004088">
    <property type="entry name" value="KH_dom_type_1"/>
</dbReference>
<dbReference type="InterPro" id="IPR036612">
    <property type="entry name" value="KH_dom_type_1_sf"/>
</dbReference>
<dbReference type="InterPro" id="IPR017705">
    <property type="entry name" value="Ribonuclease_Y"/>
</dbReference>
<dbReference type="InterPro" id="IPR022711">
    <property type="entry name" value="RNase_Y_N"/>
</dbReference>
<dbReference type="NCBIfam" id="TIGR00277">
    <property type="entry name" value="HDIG"/>
    <property type="match status" value="1"/>
</dbReference>
<dbReference type="NCBIfam" id="TIGR03319">
    <property type="entry name" value="RNase_Y"/>
    <property type="match status" value="1"/>
</dbReference>
<dbReference type="PANTHER" id="PTHR12826">
    <property type="entry name" value="RIBONUCLEASE Y"/>
    <property type="match status" value="1"/>
</dbReference>
<dbReference type="PANTHER" id="PTHR12826:SF15">
    <property type="entry name" value="RIBONUCLEASE Y"/>
    <property type="match status" value="1"/>
</dbReference>
<dbReference type="Pfam" id="PF01966">
    <property type="entry name" value="HD"/>
    <property type="match status" value="1"/>
</dbReference>
<dbReference type="Pfam" id="PF00013">
    <property type="entry name" value="KH_1"/>
    <property type="match status" value="1"/>
</dbReference>
<dbReference type="Pfam" id="PF12072">
    <property type="entry name" value="RNase_Y_N"/>
    <property type="match status" value="1"/>
</dbReference>
<dbReference type="SMART" id="SM00471">
    <property type="entry name" value="HDc"/>
    <property type="match status" value="1"/>
</dbReference>
<dbReference type="SMART" id="SM00322">
    <property type="entry name" value="KH"/>
    <property type="match status" value="1"/>
</dbReference>
<dbReference type="SUPFAM" id="SSF54791">
    <property type="entry name" value="Eukaryotic type KH-domain (KH-domain type I)"/>
    <property type="match status" value="1"/>
</dbReference>
<dbReference type="SUPFAM" id="SSF109604">
    <property type="entry name" value="HD-domain/PDEase-like"/>
    <property type="match status" value="1"/>
</dbReference>
<dbReference type="PROSITE" id="PS51831">
    <property type="entry name" value="HD"/>
    <property type="match status" value="1"/>
</dbReference>
<dbReference type="PROSITE" id="PS50084">
    <property type="entry name" value="KH_TYPE_1"/>
    <property type="match status" value="1"/>
</dbReference>
<sequence length="487" mass="55094">MIAEAKITSAEEAADKIIEDAKKQGESMKREALLEAKEEIHTQRNELEKETRERRNEIQRFERKLEQKEESLSKQQKQLEQKEKEIAQKDEKITNKEQELEKIYQQQVEELENLSGLTTQEAKDMLLNRVREDISHETAMMIKEMESRAKEEADKKAREIITTAIQRCAVDHVAESTVSVVSLPNDEMKGRIIGREGRNIRTLETLTGIDLIIDDTPEAVILSGFDPIRREIARLALEKLVSDGRIHPARIEEMVEKAQKEVDEQIREEGEQATLDTGVHGLHSELIKLLGRLKFRTSYGQNVLNHSIEVARLCGVMAHELGTDVNTAKRAGLLHDIGKAVDHEYEGPHVTIGAELGKKYGESSNVLHAIATHHGDEEPETIEAVLVQAADAISAARPGARRETLESYIKRLEKLEEIADSYKSVEKAYAIQAGREVRIMVKPEQADDETSINLARDISKQIEAELDYPGQIKITVIRETRAVEYAK</sequence>